<sequence length="413" mass="45891">MTPSISWCLLLLAGLCCLVPSFLAEDVQETDTSQKDQSPASHEIATNLGDFAISLYRELVHQSNTSNIFFSPVSIATAFAMLSLGSKGDTHTQILEGLQFNLTQTSEADIHNSFQHLLQTLNRPDSELQLSTGNGLFVNNDLKLVEKFLEEAKNHYQAEVFSVNFAESEEAKKVINDFVEKGTQGKIVEAVKKLEQDTVFVLANYILFKGKWKKPFDPENTKQAEFHVDESTTVKVPMMTLSGMLDVHHCSTLSSWVLLMDYAGNATAVFLLPDDGKMQHLEQTLNKELISKFLLNRRRRLAQIHIPRLSISGNYNLETLMSPLGITRIFNSGADLSGITEENAPLKLSQAVHKAVLTIDETGTEAAAATVLQGGFLSMPPILHFNRPFLFIIFEEHSQSPLFVGKVVDPTHK</sequence>
<proteinExistence type="evidence at protein level"/>
<keyword id="KW-0325">Glycoprotein</keyword>
<keyword id="KW-0646">Protease inhibitor</keyword>
<keyword id="KW-1185">Reference proteome</keyword>
<keyword id="KW-0964">Secreted</keyword>
<keyword id="KW-0722">Serine protease inhibitor</keyword>
<keyword id="KW-0732">Signal</keyword>
<protein>
    <recommendedName>
        <fullName>Alpha-1-antitrypsin 1-5</fullName>
    </recommendedName>
    <alternativeName>
        <fullName>Alpha-1 protease inhibitor 5</fullName>
    </alternativeName>
    <alternativeName>
        <fullName>Serine protease inhibitor 1-5</fullName>
    </alternativeName>
    <alternativeName>
        <fullName>Serine protease inhibitor A1e</fullName>
        <shortName>Serpin A1e</shortName>
    </alternativeName>
</protein>
<organism>
    <name type="scientific">Mus musculus</name>
    <name type="common">Mouse</name>
    <dbReference type="NCBI Taxonomy" id="10090"/>
    <lineage>
        <taxon>Eukaryota</taxon>
        <taxon>Metazoa</taxon>
        <taxon>Chordata</taxon>
        <taxon>Craniata</taxon>
        <taxon>Vertebrata</taxon>
        <taxon>Euteleostomi</taxon>
        <taxon>Mammalia</taxon>
        <taxon>Eutheria</taxon>
        <taxon>Euarchontoglires</taxon>
        <taxon>Glires</taxon>
        <taxon>Rodentia</taxon>
        <taxon>Myomorpha</taxon>
        <taxon>Muroidea</taxon>
        <taxon>Muridae</taxon>
        <taxon>Murinae</taxon>
        <taxon>Mus</taxon>
        <taxon>Mus</taxon>
    </lineage>
</organism>
<evidence type="ECO:0000250" key="1"/>
<evidence type="ECO:0000255" key="2"/>
<evidence type="ECO:0000269" key="3">
    <source>
    </source>
</evidence>
<evidence type="ECO:0000269" key="4">
    <source>
    </source>
</evidence>
<evidence type="ECO:0000305" key="5"/>
<feature type="signal peptide" evidence="2">
    <location>
        <begin position="1"/>
        <end position="24"/>
    </location>
</feature>
<feature type="chain" id="PRO_0000032392" description="Alpha-1-antitrypsin 1-5">
    <location>
        <begin position="25"/>
        <end position="413"/>
    </location>
</feature>
<feature type="region of interest" description="RCL">
    <location>
        <begin position="368"/>
        <end position="387"/>
    </location>
</feature>
<feature type="site" description="Reactive bond" evidence="1">
    <location>
        <begin position="377"/>
        <end position="378"/>
    </location>
</feature>
<feature type="glycosylation site" description="N-linked (GlcNAc...) asparagine" evidence="3">
    <location>
        <position position="64"/>
    </location>
</feature>
<feature type="glycosylation site" description="N-linked (GlcNAc...) asparagine" evidence="2">
    <location>
        <position position="101"/>
    </location>
</feature>
<feature type="glycosylation site" description="N-linked (GlcNAc...) asparagine" evidence="2">
    <location>
        <position position="265"/>
    </location>
</feature>
<dbReference type="EMBL" id="M75717">
    <property type="protein sequence ID" value="AAC28866.1"/>
    <property type="molecule type" value="mRNA"/>
</dbReference>
<dbReference type="EMBL" id="BC061176">
    <property type="protein sequence ID" value="AAH61176.1"/>
    <property type="molecule type" value="mRNA"/>
</dbReference>
<dbReference type="EMBL" id="AK004999">
    <property type="protein sequence ID" value="BAB23733.1"/>
    <property type="molecule type" value="mRNA"/>
</dbReference>
<dbReference type="EMBL" id="AK146576">
    <property type="protein sequence ID" value="BAE27272.1"/>
    <property type="status" value="ALT_INIT"/>
    <property type="molecule type" value="mRNA"/>
</dbReference>
<dbReference type="CCDS" id="CCDS26142.1"/>
<dbReference type="PIR" id="I49474">
    <property type="entry name" value="I49474"/>
</dbReference>
<dbReference type="RefSeq" id="NP_033273.1">
    <property type="nucleotide sequence ID" value="NM_009247.2"/>
</dbReference>
<dbReference type="SMR" id="Q00898"/>
<dbReference type="BioGRID" id="203430">
    <property type="interactions" value="1"/>
</dbReference>
<dbReference type="FunCoup" id="Q00898">
    <property type="interactions" value="285"/>
</dbReference>
<dbReference type="IntAct" id="Q00898">
    <property type="interactions" value="1"/>
</dbReference>
<dbReference type="STRING" id="10090.ENSMUSP00000113606"/>
<dbReference type="MEROPS" id="I04.001"/>
<dbReference type="GlyCosmos" id="Q00898">
    <property type="glycosylation" value="3 sites, No reported glycans"/>
</dbReference>
<dbReference type="GlyGen" id="Q00898">
    <property type="glycosylation" value="4 sites, 1 N-linked glycan (1 site), 1 O-linked glycan (1 site)"/>
</dbReference>
<dbReference type="iPTMnet" id="Q00898"/>
<dbReference type="PhosphoSitePlus" id="Q00898"/>
<dbReference type="SwissPalm" id="Q00898"/>
<dbReference type="CPTAC" id="non-CPTAC-3889"/>
<dbReference type="jPOST" id="Q00898"/>
<dbReference type="PaxDb" id="10090-ENSMUSP00000082130"/>
<dbReference type="PeptideAtlas" id="Q00898"/>
<dbReference type="ProteomicsDB" id="285695"/>
<dbReference type="DNASU" id="20704"/>
<dbReference type="Ensembl" id="ENSMUST00000085054.5">
    <property type="protein sequence ID" value="ENSMUSP00000082130.5"/>
    <property type="gene ID" value="ENSMUSG00000072849.11"/>
</dbReference>
<dbReference type="Ensembl" id="ENSMUST00000122229.8">
    <property type="protein sequence ID" value="ENSMUSP00000113606.2"/>
    <property type="gene ID" value="ENSMUSG00000072849.11"/>
</dbReference>
<dbReference type="GeneID" id="20704"/>
<dbReference type="KEGG" id="mmu:20704"/>
<dbReference type="UCSC" id="uc007owl.1">
    <property type="organism name" value="mouse"/>
</dbReference>
<dbReference type="AGR" id="MGI:891967"/>
<dbReference type="CTD" id="20704"/>
<dbReference type="MGI" id="MGI:891967">
    <property type="gene designation" value="Serpina1e"/>
</dbReference>
<dbReference type="VEuPathDB" id="HostDB:ENSMUSG00000072849"/>
<dbReference type="eggNOG" id="KOG2392">
    <property type="taxonomic scope" value="Eukaryota"/>
</dbReference>
<dbReference type="GeneTree" id="ENSGT00940000154493"/>
<dbReference type="HOGENOM" id="CLU_023330_2_1_1"/>
<dbReference type="InParanoid" id="Q00898"/>
<dbReference type="OMA" id="WCISSEQ"/>
<dbReference type="OrthoDB" id="671595at2759"/>
<dbReference type="PhylomeDB" id="Q00898"/>
<dbReference type="TreeFam" id="TF343201"/>
<dbReference type="BioGRID-ORCS" id="20704">
    <property type="hits" value="3 hits in 76 CRISPR screens"/>
</dbReference>
<dbReference type="ChiTaRS" id="Serpina1e">
    <property type="organism name" value="mouse"/>
</dbReference>
<dbReference type="PRO" id="PR:Q00898"/>
<dbReference type="Proteomes" id="UP000000589">
    <property type="component" value="Chromosome 12"/>
</dbReference>
<dbReference type="RNAct" id="Q00898">
    <property type="molecule type" value="protein"/>
</dbReference>
<dbReference type="Bgee" id="ENSMUSG00000072849">
    <property type="expression patterns" value="Expressed in liver and 46 other cell types or tissues"/>
</dbReference>
<dbReference type="GO" id="GO:0005615">
    <property type="term" value="C:extracellular space"/>
    <property type="evidence" value="ECO:0007669"/>
    <property type="project" value="InterPro"/>
</dbReference>
<dbReference type="GO" id="GO:0004867">
    <property type="term" value="F:serine-type endopeptidase inhibitor activity"/>
    <property type="evidence" value="ECO:0007669"/>
    <property type="project" value="UniProtKB-KW"/>
</dbReference>
<dbReference type="GO" id="GO:0034097">
    <property type="term" value="P:response to cytokine"/>
    <property type="evidence" value="ECO:0000314"/>
    <property type="project" value="MGI"/>
</dbReference>
<dbReference type="GO" id="GO:0043434">
    <property type="term" value="P:response to peptide hormone"/>
    <property type="evidence" value="ECO:0000314"/>
    <property type="project" value="MGI"/>
</dbReference>
<dbReference type="CDD" id="cd02056">
    <property type="entry name" value="serpinA1_A1AT"/>
    <property type="match status" value="1"/>
</dbReference>
<dbReference type="FunFam" id="2.30.39.10:FF:000003">
    <property type="entry name" value="alpha-1-antitrypsin isoform X1"/>
    <property type="match status" value="1"/>
</dbReference>
<dbReference type="FunFam" id="3.30.497.10:FF:000001">
    <property type="entry name" value="Serine protease inhibitor"/>
    <property type="match status" value="1"/>
</dbReference>
<dbReference type="FunFam" id="2.10.310.10:FF:000001">
    <property type="entry name" value="Serpin family A member 1"/>
    <property type="match status" value="1"/>
</dbReference>
<dbReference type="Gene3D" id="2.30.39.10">
    <property type="entry name" value="Alpha-1-antitrypsin, domain 1"/>
    <property type="match status" value="1"/>
</dbReference>
<dbReference type="Gene3D" id="3.30.497.10">
    <property type="entry name" value="Antithrombin, subunit I, domain 2"/>
    <property type="match status" value="1"/>
</dbReference>
<dbReference type="Gene3D" id="2.10.310.10">
    <property type="entry name" value="Serpins superfamily"/>
    <property type="match status" value="1"/>
</dbReference>
<dbReference type="InterPro" id="IPR023795">
    <property type="entry name" value="Serpin_CS"/>
</dbReference>
<dbReference type="InterPro" id="IPR023796">
    <property type="entry name" value="Serpin_dom"/>
</dbReference>
<dbReference type="InterPro" id="IPR000215">
    <property type="entry name" value="Serpin_fam"/>
</dbReference>
<dbReference type="InterPro" id="IPR036186">
    <property type="entry name" value="Serpin_sf"/>
</dbReference>
<dbReference type="InterPro" id="IPR042178">
    <property type="entry name" value="Serpin_sf_1"/>
</dbReference>
<dbReference type="InterPro" id="IPR042185">
    <property type="entry name" value="Serpin_sf_2"/>
</dbReference>
<dbReference type="PANTHER" id="PTHR11461:SF165">
    <property type="entry name" value="ALPHA-1-ANTITRYPSIN"/>
    <property type="match status" value="1"/>
</dbReference>
<dbReference type="PANTHER" id="PTHR11461">
    <property type="entry name" value="SERINE PROTEASE INHIBITOR, SERPIN"/>
    <property type="match status" value="1"/>
</dbReference>
<dbReference type="Pfam" id="PF00079">
    <property type="entry name" value="Serpin"/>
    <property type="match status" value="1"/>
</dbReference>
<dbReference type="SMART" id="SM00093">
    <property type="entry name" value="SERPIN"/>
    <property type="match status" value="1"/>
</dbReference>
<dbReference type="SUPFAM" id="SSF56574">
    <property type="entry name" value="Serpins"/>
    <property type="match status" value="1"/>
</dbReference>
<dbReference type="PROSITE" id="PS00284">
    <property type="entry name" value="SERPIN"/>
    <property type="match status" value="1"/>
</dbReference>
<comment type="function">
    <text>Does not inhibit elastase or chymotrypsin. No target protease has been identified to date.</text>
</comment>
<comment type="subcellular location">
    <subcellularLocation>
        <location evidence="4">Secreted</location>
    </subcellularLocation>
</comment>
<comment type="domain">
    <text evidence="1">The reactive center loop (RCL) extends out from the body of the protein and directs binding to the target protease. The protease cleaves the serpin at the reactive site within the RCL, establishing a covalent linkage between the serpin reactive site and the active site of the protease. The resulting inactive serpin-protease complex is highly stable (By similarity). Variability within the reactive center loop (RCL) sequences of Serpina1-related genes may determine target protease specificity.</text>
</comment>
<comment type="miscellaneous">
    <text>Murine alpha-1-antitrypsin is represented by a cluster of up to 6 individual Serpina1-related genes. The precise complement of Serpina1-related genes present varies according to the strain of the animal.</text>
</comment>
<comment type="similarity">
    <text evidence="5">Belongs to the serpin family.</text>
</comment>
<comment type="sequence caution" evidence="5">
    <conflict type="erroneous initiation">
        <sequence resource="EMBL-CDS" id="BAE27272"/>
    </conflict>
</comment>
<gene>
    <name type="primary">Serpina1e</name>
    <name type="synonym">Dom5</name>
    <name type="synonym">Spi1-5</name>
</gene>
<name>A1AT5_MOUSE</name>
<reference key="1">
    <citation type="journal article" date="1991" name="Proc. Natl. Acad. Sci. U.S.A.">
        <title>Multiple murine alpha 1-protease inhibitor genes show unusual evolutionary divergence.</title>
        <authorList>
            <person name="Borriello F."/>
            <person name="Krauter K.S."/>
        </authorList>
    </citation>
    <scope>NUCLEOTIDE SEQUENCE [MRNA]</scope>
    <source>
        <strain>C57BL/6J</strain>
        <tissue>Liver</tissue>
    </source>
</reference>
<reference key="2">
    <citation type="journal article" date="2005" name="Science">
        <title>The transcriptional landscape of the mammalian genome.</title>
        <authorList>
            <person name="Carninci P."/>
            <person name="Kasukawa T."/>
            <person name="Katayama S."/>
            <person name="Gough J."/>
            <person name="Frith M.C."/>
            <person name="Maeda N."/>
            <person name="Oyama R."/>
            <person name="Ravasi T."/>
            <person name="Lenhard B."/>
            <person name="Wells C."/>
            <person name="Kodzius R."/>
            <person name="Shimokawa K."/>
            <person name="Bajic V.B."/>
            <person name="Brenner S.E."/>
            <person name="Batalov S."/>
            <person name="Forrest A.R."/>
            <person name="Zavolan M."/>
            <person name="Davis M.J."/>
            <person name="Wilming L.G."/>
            <person name="Aidinis V."/>
            <person name="Allen J.E."/>
            <person name="Ambesi-Impiombato A."/>
            <person name="Apweiler R."/>
            <person name="Aturaliya R.N."/>
            <person name="Bailey T.L."/>
            <person name="Bansal M."/>
            <person name="Baxter L."/>
            <person name="Beisel K.W."/>
            <person name="Bersano T."/>
            <person name="Bono H."/>
            <person name="Chalk A.M."/>
            <person name="Chiu K.P."/>
            <person name="Choudhary V."/>
            <person name="Christoffels A."/>
            <person name="Clutterbuck D.R."/>
            <person name="Crowe M.L."/>
            <person name="Dalla E."/>
            <person name="Dalrymple B.P."/>
            <person name="de Bono B."/>
            <person name="Della Gatta G."/>
            <person name="di Bernardo D."/>
            <person name="Down T."/>
            <person name="Engstrom P."/>
            <person name="Fagiolini M."/>
            <person name="Faulkner G."/>
            <person name="Fletcher C.F."/>
            <person name="Fukushima T."/>
            <person name="Furuno M."/>
            <person name="Futaki S."/>
            <person name="Gariboldi M."/>
            <person name="Georgii-Hemming P."/>
            <person name="Gingeras T.R."/>
            <person name="Gojobori T."/>
            <person name="Green R.E."/>
            <person name="Gustincich S."/>
            <person name="Harbers M."/>
            <person name="Hayashi Y."/>
            <person name="Hensch T.K."/>
            <person name="Hirokawa N."/>
            <person name="Hill D."/>
            <person name="Huminiecki L."/>
            <person name="Iacono M."/>
            <person name="Ikeo K."/>
            <person name="Iwama A."/>
            <person name="Ishikawa T."/>
            <person name="Jakt M."/>
            <person name="Kanapin A."/>
            <person name="Katoh M."/>
            <person name="Kawasawa Y."/>
            <person name="Kelso J."/>
            <person name="Kitamura H."/>
            <person name="Kitano H."/>
            <person name="Kollias G."/>
            <person name="Krishnan S.P."/>
            <person name="Kruger A."/>
            <person name="Kummerfeld S.K."/>
            <person name="Kurochkin I.V."/>
            <person name="Lareau L.F."/>
            <person name="Lazarevic D."/>
            <person name="Lipovich L."/>
            <person name="Liu J."/>
            <person name="Liuni S."/>
            <person name="McWilliam S."/>
            <person name="Madan Babu M."/>
            <person name="Madera M."/>
            <person name="Marchionni L."/>
            <person name="Matsuda H."/>
            <person name="Matsuzawa S."/>
            <person name="Miki H."/>
            <person name="Mignone F."/>
            <person name="Miyake S."/>
            <person name="Morris K."/>
            <person name="Mottagui-Tabar S."/>
            <person name="Mulder N."/>
            <person name="Nakano N."/>
            <person name="Nakauchi H."/>
            <person name="Ng P."/>
            <person name="Nilsson R."/>
            <person name="Nishiguchi S."/>
            <person name="Nishikawa S."/>
            <person name="Nori F."/>
            <person name="Ohara O."/>
            <person name="Okazaki Y."/>
            <person name="Orlando V."/>
            <person name="Pang K.C."/>
            <person name="Pavan W.J."/>
            <person name="Pavesi G."/>
            <person name="Pesole G."/>
            <person name="Petrovsky N."/>
            <person name="Piazza S."/>
            <person name="Reed J."/>
            <person name="Reid J.F."/>
            <person name="Ring B.Z."/>
            <person name="Ringwald M."/>
            <person name="Rost B."/>
            <person name="Ruan Y."/>
            <person name="Salzberg S.L."/>
            <person name="Sandelin A."/>
            <person name="Schneider C."/>
            <person name="Schoenbach C."/>
            <person name="Sekiguchi K."/>
            <person name="Semple C.A."/>
            <person name="Seno S."/>
            <person name="Sessa L."/>
            <person name="Sheng Y."/>
            <person name="Shibata Y."/>
            <person name="Shimada H."/>
            <person name="Shimada K."/>
            <person name="Silva D."/>
            <person name="Sinclair B."/>
            <person name="Sperling S."/>
            <person name="Stupka E."/>
            <person name="Sugiura K."/>
            <person name="Sultana R."/>
            <person name="Takenaka Y."/>
            <person name="Taki K."/>
            <person name="Tammoja K."/>
            <person name="Tan S.L."/>
            <person name="Tang S."/>
            <person name="Taylor M.S."/>
            <person name="Tegner J."/>
            <person name="Teichmann S.A."/>
            <person name="Ueda H.R."/>
            <person name="van Nimwegen E."/>
            <person name="Verardo R."/>
            <person name="Wei C.L."/>
            <person name="Yagi K."/>
            <person name="Yamanishi H."/>
            <person name="Zabarovsky E."/>
            <person name="Zhu S."/>
            <person name="Zimmer A."/>
            <person name="Hide W."/>
            <person name="Bult C."/>
            <person name="Grimmond S.M."/>
            <person name="Teasdale R.D."/>
            <person name="Liu E.T."/>
            <person name="Brusic V."/>
            <person name="Quackenbush J."/>
            <person name="Wahlestedt C."/>
            <person name="Mattick J.S."/>
            <person name="Hume D.A."/>
            <person name="Kai C."/>
            <person name="Sasaki D."/>
            <person name="Tomaru Y."/>
            <person name="Fukuda S."/>
            <person name="Kanamori-Katayama M."/>
            <person name="Suzuki M."/>
            <person name="Aoki J."/>
            <person name="Arakawa T."/>
            <person name="Iida J."/>
            <person name="Imamura K."/>
            <person name="Itoh M."/>
            <person name="Kato T."/>
            <person name="Kawaji H."/>
            <person name="Kawagashira N."/>
            <person name="Kawashima T."/>
            <person name="Kojima M."/>
            <person name="Kondo S."/>
            <person name="Konno H."/>
            <person name="Nakano K."/>
            <person name="Ninomiya N."/>
            <person name="Nishio T."/>
            <person name="Okada M."/>
            <person name="Plessy C."/>
            <person name="Shibata K."/>
            <person name="Shiraki T."/>
            <person name="Suzuki S."/>
            <person name="Tagami M."/>
            <person name="Waki K."/>
            <person name="Watahiki A."/>
            <person name="Okamura-Oho Y."/>
            <person name="Suzuki H."/>
            <person name="Kawai J."/>
            <person name="Hayashizaki Y."/>
        </authorList>
    </citation>
    <scope>NUCLEOTIDE SEQUENCE [LARGE SCALE MRNA]</scope>
    <source>
        <strain>C57BL/6J</strain>
        <tissue>Liver</tissue>
        <tissue>Stomach</tissue>
    </source>
</reference>
<reference key="3">
    <citation type="journal article" date="2004" name="Genome Res.">
        <title>The status, quality, and expansion of the NIH full-length cDNA project: the Mammalian Gene Collection (MGC).</title>
        <authorList>
            <consortium name="The MGC Project Team"/>
        </authorList>
    </citation>
    <scope>NUCLEOTIDE SEQUENCE [LARGE SCALE MRNA]</scope>
    <source>
        <tissue>Liver</tissue>
    </source>
</reference>
<reference key="4">
    <citation type="journal article" date="1996" name="Biochem. Biophys. Res. Commun.">
        <title>The expression and characterization of five recombinant murine alpha 1-protease inhibitor proteins.</title>
        <authorList>
            <person name="Paterson T."/>
            <person name="Moore S."/>
        </authorList>
    </citation>
    <scope>SUBCELLULAR LOCATION</scope>
</reference>
<reference key="5">
    <citation type="journal article" date="2003" name="Genomics">
        <title>A review and comparison of the murine alpha1-antitrypsin and alpha1-antichymotrypsin multigene clusters with the human clade A serpins.</title>
        <authorList>
            <person name="Forsyth S."/>
            <person name="Horvath A."/>
            <person name="Coughlin P."/>
        </authorList>
    </citation>
    <scope>GENE FAMILY</scope>
    <scope>NOMENCLATURE</scope>
</reference>
<reference key="6">
    <citation type="journal article" date="2006" name="J. Proteome Res.">
        <title>Proteome-wide characterization of N-glycosylation events by diagonal chromatography.</title>
        <authorList>
            <person name="Ghesquiere B."/>
            <person name="Van Damme J."/>
            <person name="Martens L."/>
            <person name="Vandekerckhove J."/>
            <person name="Gevaert K."/>
        </authorList>
    </citation>
    <scope>GLYCOSYLATION [LARGE SCALE ANALYSIS] AT ASN-64</scope>
    <source>
        <strain>C57BL/6J</strain>
        <tissue>Plasma</tissue>
    </source>
</reference>
<accession>Q00898</accession>
<accession>Q3UJ83</accession>
<accession>Q545P1</accession>